<accession>Q8BUY5</accession>
<accession>Q99LS9</accession>
<accession>Q9CSI1</accession>
<gene>
    <name evidence="6" type="primary">Timmdc1</name>
</gene>
<reference key="1">
    <citation type="journal article" date="2005" name="Science">
        <title>The transcriptional landscape of the mammalian genome.</title>
        <authorList>
            <person name="Carninci P."/>
            <person name="Kasukawa T."/>
            <person name="Katayama S."/>
            <person name="Gough J."/>
            <person name="Frith M.C."/>
            <person name="Maeda N."/>
            <person name="Oyama R."/>
            <person name="Ravasi T."/>
            <person name="Lenhard B."/>
            <person name="Wells C."/>
            <person name="Kodzius R."/>
            <person name="Shimokawa K."/>
            <person name="Bajic V.B."/>
            <person name="Brenner S.E."/>
            <person name="Batalov S."/>
            <person name="Forrest A.R."/>
            <person name="Zavolan M."/>
            <person name="Davis M.J."/>
            <person name="Wilming L.G."/>
            <person name="Aidinis V."/>
            <person name="Allen J.E."/>
            <person name="Ambesi-Impiombato A."/>
            <person name="Apweiler R."/>
            <person name="Aturaliya R.N."/>
            <person name="Bailey T.L."/>
            <person name="Bansal M."/>
            <person name="Baxter L."/>
            <person name="Beisel K.W."/>
            <person name="Bersano T."/>
            <person name="Bono H."/>
            <person name="Chalk A.M."/>
            <person name="Chiu K.P."/>
            <person name="Choudhary V."/>
            <person name="Christoffels A."/>
            <person name="Clutterbuck D.R."/>
            <person name="Crowe M.L."/>
            <person name="Dalla E."/>
            <person name="Dalrymple B.P."/>
            <person name="de Bono B."/>
            <person name="Della Gatta G."/>
            <person name="di Bernardo D."/>
            <person name="Down T."/>
            <person name="Engstrom P."/>
            <person name="Fagiolini M."/>
            <person name="Faulkner G."/>
            <person name="Fletcher C.F."/>
            <person name="Fukushima T."/>
            <person name="Furuno M."/>
            <person name="Futaki S."/>
            <person name="Gariboldi M."/>
            <person name="Georgii-Hemming P."/>
            <person name="Gingeras T.R."/>
            <person name="Gojobori T."/>
            <person name="Green R.E."/>
            <person name="Gustincich S."/>
            <person name="Harbers M."/>
            <person name="Hayashi Y."/>
            <person name="Hensch T.K."/>
            <person name="Hirokawa N."/>
            <person name="Hill D."/>
            <person name="Huminiecki L."/>
            <person name="Iacono M."/>
            <person name="Ikeo K."/>
            <person name="Iwama A."/>
            <person name="Ishikawa T."/>
            <person name="Jakt M."/>
            <person name="Kanapin A."/>
            <person name="Katoh M."/>
            <person name="Kawasawa Y."/>
            <person name="Kelso J."/>
            <person name="Kitamura H."/>
            <person name="Kitano H."/>
            <person name="Kollias G."/>
            <person name="Krishnan S.P."/>
            <person name="Kruger A."/>
            <person name="Kummerfeld S.K."/>
            <person name="Kurochkin I.V."/>
            <person name="Lareau L.F."/>
            <person name="Lazarevic D."/>
            <person name="Lipovich L."/>
            <person name="Liu J."/>
            <person name="Liuni S."/>
            <person name="McWilliam S."/>
            <person name="Madan Babu M."/>
            <person name="Madera M."/>
            <person name="Marchionni L."/>
            <person name="Matsuda H."/>
            <person name="Matsuzawa S."/>
            <person name="Miki H."/>
            <person name="Mignone F."/>
            <person name="Miyake S."/>
            <person name="Morris K."/>
            <person name="Mottagui-Tabar S."/>
            <person name="Mulder N."/>
            <person name="Nakano N."/>
            <person name="Nakauchi H."/>
            <person name="Ng P."/>
            <person name="Nilsson R."/>
            <person name="Nishiguchi S."/>
            <person name="Nishikawa S."/>
            <person name="Nori F."/>
            <person name="Ohara O."/>
            <person name="Okazaki Y."/>
            <person name="Orlando V."/>
            <person name="Pang K.C."/>
            <person name="Pavan W.J."/>
            <person name="Pavesi G."/>
            <person name="Pesole G."/>
            <person name="Petrovsky N."/>
            <person name="Piazza S."/>
            <person name="Reed J."/>
            <person name="Reid J.F."/>
            <person name="Ring B.Z."/>
            <person name="Ringwald M."/>
            <person name="Rost B."/>
            <person name="Ruan Y."/>
            <person name="Salzberg S.L."/>
            <person name="Sandelin A."/>
            <person name="Schneider C."/>
            <person name="Schoenbach C."/>
            <person name="Sekiguchi K."/>
            <person name="Semple C.A."/>
            <person name="Seno S."/>
            <person name="Sessa L."/>
            <person name="Sheng Y."/>
            <person name="Shibata Y."/>
            <person name="Shimada H."/>
            <person name="Shimada K."/>
            <person name="Silva D."/>
            <person name="Sinclair B."/>
            <person name="Sperling S."/>
            <person name="Stupka E."/>
            <person name="Sugiura K."/>
            <person name="Sultana R."/>
            <person name="Takenaka Y."/>
            <person name="Taki K."/>
            <person name="Tammoja K."/>
            <person name="Tan S.L."/>
            <person name="Tang S."/>
            <person name="Taylor M.S."/>
            <person name="Tegner J."/>
            <person name="Teichmann S.A."/>
            <person name="Ueda H.R."/>
            <person name="van Nimwegen E."/>
            <person name="Verardo R."/>
            <person name="Wei C.L."/>
            <person name="Yagi K."/>
            <person name="Yamanishi H."/>
            <person name="Zabarovsky E."/>
            <person name="Zhu S."/>
            <person name="Zimmer A."/>
            <person name="Hide W."/>
            <person name="Bult C."/>
            <person name="Grimmond S.M."/>
            <person name="Teasdale R.D."/>
            <person name="Liu E.T."/>
            <person name="Brusic V."/>
            <person name="Quackenbush J."/>
            <person name="Wahlestedt C."/>
            <person name="Mattick J.S."/>
            <person name="Hume D.A."/>
            <person name="Kai C."/>
            <person name="Sasaki D."/>
            <person name="Tomaru Y."/>
            <person name="Fukuda S."/>
            <person name="Kanamori-Katayama M."/>
            <person name="Suzuki M."/>
            <person name="Aoki J."/>
            <person name="Arakawa T."/>
            <person name="Iida J."/>
            <person name="Imamura K."/>
            <person name="Itoh M."/>
            <person name="Kato T."/>
            <person name="Kawaji H."/>
            <person name="Kawagashira N."/>
            <person name="Kawashima T."/>
            <person name="Kojima M."/>
            <person name="Kondo S."/>
            <person name="Konno H."/>
            <person name="Nakano K."/>
            <person name="Ninomiya N."/>
            <person name="Nishio T."/>
            <person name="Okada M."/>
            <person name="Plessy C."/>
            <person name="Shibata K."/>
            <person name="Shiraki T."/>
            <person name="Suzuki S."/>
            <person name="Tagami M."/>
            <person name="Waki K."/>
            <person name="Watahiki A."/>
            <person name="Okamura-Oho Y."/>
            <person name="Suzuki H."/>
            <person name="Kawai J."/>
            <person name="Hayashizaki Y."/>
        </authorList>
    </citation>
    <scope>NUCLEOTIDE SEQUENCE [LARGE SCALE MRNA]</scope>
    <source>
        <strain>C57BL/6J</strain>
        <tissue>Head</tissue>
    </source>
</reference>
<reference key="2">
    <citation type="journal article" date="2004" name="Genome Res.">
        <title>The status, quality, and expansion of the NIH full-length cDNA project: the Mammalian Gene Collection (MGC).</title>
        <authorList>
            <consortium name="The MGC Project Team"/>
        </authorList>
    </citation>
    <scope>NUCLEOTIDE SEQUENCE [LARGE SCALE MRNA]</scope>
    <source>
        <strain>Czech II</strain>
        <tissue>Mammary tumor</tissue>
    </source>
</reference>
<reference key="3">
    <citation type="journal article" date="2010" name="Cell">
        <title>A tissue-specific atlas of mouse protein phosphorylation and expression.</title>
        <authorList>
            <person name="Huttlin E.L."/>
            <person name="Jedrychowski M.P."/>
            <person name="Elias J.E."/>
            <person name="Goswami T."/>
            <person name="Rad R."/>
            <person name="Beausoleil S.A."/>
            <person name="Villen J."/>
            <person name="Haas W."/>
            <person name="Sowa M.E."/>
            <person name="Gygi S.P."/>
        </authorList>
    </citation>
    <scope>IDENTIFICATION BY MASS SPECTROMETRY [LARGE SCALE ANALYSIS]</scope>
    <source>
        <tissue>Brown adipose tissue</tissue>
        <tissue>Heart</tissue>
        <tissue>Kidney</tissue>
        <tissue>Liver</tissue>
    </source>
</reference>
<evidence type="ECO:0000250" key="1"/>
<evidence type="ECO:0000250" key="2">
    <source>
        <dbReference type="UniProtKB" id="Q9NPL8"/>
    </source>
</evidence>
<evidence type="ECO:0000255" key="3"/>
<evidence type="ECO:0000256" key="4">
    <source>
        <dbReference type="SAM" id="MobiDB-lite"/>
    </source>
</evidence>
<evidence type="ECO:0000305" key="5"/>
<evidence type="ECO:0000312" key="6">
    <source>
        <dbReference type="MGI" id="MGI:1922139"/>
    </source>
</evidence>
<protein>
    <recommendedName>
        <fullName evidence="5">Complex I assembly factor TIMMDC1, mitochondrial</fullName>
    </recommendedName>
    <alternativeName>
        <fullName>Translocase of inner mitochondrial membrane domain-containing protein 1</fullName>
        <shortName>TIMM domain containing-protein 1</shortName>
    </alternativeName>
</protein>
<feature type="chain" id="PRO_0000252479" description="Complex I assembly factor TIMMDC1, mitochondrial">
    <location>
        <begin position="1"/>
        <end position="285"/>
    </location>
</feature>
<feature type="transmembrane region" description="Helical" evidence="3">
    <location>
        <begin position="80"/>
        <end position="100"/>
    </location>
</feature>
<feature type="transmembrane region" description="Helical" evidence="3">
    <location>
        <begin position="137"/>
        <end position="159"/>
    </location>
</feature>
<feature type="transmembrane region" description="Helical" evidence="3">
    <location>
        <begin position="165"/>
        <end position="185"/>
    </location>
</feature>
<feature type="transmembrane region" description="Helical" evidence="3">
    <location>
        <begin position="188"/>
        <end position="208"/>
    </location>
</feature>
<feature type="region of interest" description="Disordered" evidence="4">
    <location>
        <begin position="265"/>
        <end position="285"/>
    </location>
</feature>
<feature type="compositionally biased region" description="Polar residues" evidence="4">
    <location>
        <begin position="274"/>
        <end position="285"/>
    </location>
</feature>
<feature type="modified residue" description="Phosphoserine" evidence="2">
    <location>
        <position position="277"/>
    </location>
</feature>
<feature type="sequence conflict" description="In Ref. 2; AAH02243." evidence="5" ref="2">
    <original>G</original>
    <variation>E</variation>
    <location>
        <position position="26"/>
    </location>
</feature>
<feature type="sequence conflict" description="In Ref. 2; AAH02243." evidence="5" ref="2">
    <original>GD</original>
    <variation>EN</variation>
    <location>
        <begin position="261"/>
        <end position="262"/>
    </location>
</feature>
<feature type="sequence conflict" description="In Ref. 2; AAH02243." evidence="5" ref="2">
    <original>H</original>
    <variation>D</variation>
    <location>
        <position position="280"/>
    </location>
</feature>
<feature type="sequence conflict" description="In Ref. 2; AAH02243." evidence="5" ref="2">
    <original>H</original>
    <variation>D</variation>
    <location>
        <position position="285"/>
    </location>
</feature>
<proteinExistence type="evidence at protein level"/>
<dbReference type="EMBL" id="AK012774">
    <property type="protein sequence ID" value="BAB28461.1"/>
    <property type="molecule type" value="mRNA"/>
</dbReference>
<dbReference type="EMBL" id="AK081781">
    <property type="protein sequence ID" value="BAC38330.1"/>
    <property type="molecule type" value="mRNA"/>
</dbReference>
<dbReference type="EMBL" id="BC002243">
    <property type="protein sequence ID" value="AAH02243.1"/>
    <property type="molecule type" value="mRNA"/>
</dbReference>
<dbReference type="CCDS" id="CCDS28169.1"/>
<dbReference type="RefSeq" id="NP_077235.2">
    <property type="nucleotide sequence ID" value="NM_024273.2"/>
</dbReference>
<dbReference type="BioGRID" id="218392">
    <property type="interactions" value="4"/>
</dbReference>
<dbReference type="FunCoup" id="Q8BUY5">
    <property type="interactions" value="2915"/>
</dbReference>
<dbReference type="IntAct" id="Q8BUY5">
    <property type="interactions" value="1"/>
</dbReference>
<dbReference type="STRING" id="10090.ENSMUSP00000002925"/>
<dbReference type="GlyGen" id="Q8BUY5">
    <property type="glycosylation" value="1 site, 1 O-linked glycan (1 site)"/>
</dbReference>
<dbReference type="iPTMnet" id="Q8BUY5"/>
<dbReference type="PhosphoSitePlus" id="Q8BUY5"/>
<dbReference type="PaxDb" id="10090-ENSMUSP00000002925"/>
<dbReference type="PeptideAtlas" id="Q8BUY5"/>
<dbReference type="ProteomicsDB" id="258883"/>
<dbReference type="Pumba" id="Q8BUY5"/>
<dbReference type="Antibodypedia" id="53806">
    <property type="antibodies" value="35 antibodies from 16 providers"/>
</dbReference>
<dbReference type="DNASU" id="76916"/>
<dbReference type="Ensembl" id="ENSMUST00000002925.6">
    <property type="protein sequence ID" value="ENSMUSP00000002925.6"/>
    <property type="gene ID" value="ENSMUSG00000002846.10"/>
</dbReference>
<dbReference type="GeneID" id="76916"/>
<dbReference type="KEGG" id="mmu:76916"/>
<dbReference type="UCSC" id="uc012afp.1">
    <property type="organism name" value="mouse"/>
</dbReference>
<dbReference type="AGR" id="MGI:1922139"/>
<dbReference type="CTD" id="51300"/>
<dbReference type="MGI" id="MGI:1922139">
    <property type="gene designation" value="Timmdc1"/>
</dbReference>
<dbReference type="VEuPathDB" id="HostDB:ENSMUSG00000002846"/>
<dbReference type="eggNOG" id="KOG4608">
    <property type="taxonomic scope" value="Eukaryota"/>
</dbReference>
<dbReference type="GeneTree" id="ENSGT00390000013817"/>
<dbReference type="HOGENOM" id="CLU_068982_0_0_1"/>
<dbReference type="InParanoid" id="Q8BUY5"/>
<dbReference type="OMA" id="SYMNFME"/>
<dbReference type="OrthoDB" id="5826189at2759"/>
<dbReference type="PhylomeDB" id="Q8BUY5"/>
<dbReference type="TreeFam" id="TF324676"/>
<dbReference type="Reactome" id="R-MMU-6799198">
    <property type="pathway name" value="Complex I biogenesis"/>
</dbReference>
<dbReference type="BioGRID-ORCS" id="76916">
    <property type="hits" value="18 hits in 75 CRISPR screens"/>
</dbReference>
<dbReference type="ChiTaRS" id="Timmdc1">
    <property type="organism name" value="mouse"/>
</dbReference>
<dbReference type="PRO" id="PR:Q8BUY5"/>
<dbReference type="Proteomes" id="UP000000589">
    <property type="component" value="Chromosome 16"/>
</dbReference>
<dbReference type="RNAct" id="Q8BUY5">
    <property type="molecule type" value="protein"/>
</dbReference>
<dbReference type="Bgee" id="ENSMUSG00000002846">
    <property type="expression patterns" value="Expressed in gastrula and 197 other cell types or tissues"/>
</dbReference>
<dbReference type="GO" id="GO:0031966">
    <property type="term" value="C:mitochondrial membrane"/>
    <property type="evidence" value="ECO:0007669"/>
    <property type="project" value="UniProtKB-SubCell"/>
</dbReference>
<dbReference type="GO" id="GO:0005739">
    <property type="term" value="C:mitochondrion"/>
    <property type="evidence" value="ECO:0007005"/>
    <property type="project" value="MGI"/>
</dbReference>
<dbReference type="GO" id="GO:0005654">
    <property type="term" value="C:nucleoplasm"/>
    <property type="evidence" value="ECO:0007669"/>
    <property type="project" value="Ensembl"/>
</dbReference>
<dbReference type="GO" id="GO:0032981">
    <property type="term" value="P:mitochondrial respiratory chain complex I assembly"/>
    <property type="evidence" value="ECO:0007669"/>
    <property type="project" value="InterPro"/>
</dbReference>
<dbReference type="InterPro" id="IPR055299">
    <property type="entry name" value="TIMMDC1"/>
</dbReference>
<dbReference type="PANTHER" id="PTHR13002">
    <property type="entry name" value="C3ORF1 PROTEIN-RELATED"/>
    <property type="match status" value="1"/>
</dbReference>
<dbReference type="PANTHER" id="PTHR13002:SF1">
    <property type="entry name" value="COMPLEX I ASSEMBLY FACTOR TIMMDC1, MITOCHONDRIAL"/>
    <property type="match status" value="1"/>
</dbReference>
<dbReference type="Pfam" id="PF02466">
    <property type="entry name" value="Tim17"/>
    <property type="match status" value="1"/>
</dbReference>
<sequence length="285" mass="31791">MGAPPPAPRSRLCGAWGPFPRVFAAGAVAADSPGFVEDREQRSGVSDPGSLESGWDRLRQLFAKDEQQRFSKEIDYIYRAAVSAGIIGWAYGGIPAFIYAKKRYIEQSQAEIYHNRFDAVQSAHRAATRGFIRYGWRWSWRTAVFVTIFNTVNTGLTVYRNKDAMSHFAIAGAVTGGLFRINLGVRGLVAGSIIGALLGAPMGSLLMALEKYSGETVQERRQKEWKALHEQRLEEWRSSLQVTELLPMEIESGLEKIQPEGDAQRIEELLSLPRNPSSPHQQSKH</sequence>
<organism>
    <name type="scientific">Mus musculus</name>
    <name type="common">Mouse</name>
    <dbReference type="NCBI Taxonomy" id="10090"/>
    <lineage>
        <taxon>Eukaryota</taxon>
        <taxon>Metazoa</taxon>
        <taxon>Chordata</taxon>
        <taxon>Craniata</taxon>
        <taxon>Vertebrata</taxon>
        <taxon>Euteleostomi</taxon>
        <taxon>Mammalia</taxon>
        <taxon>Eutheria</taxon>
        <taxon>Euarchontoglires</taxon>
        <taxon>Glires</taxon>
        <taxon>Rodentia</taxon>
        <taxon>Myomorpha</taxon>
        <taxon>Muroidea</taxon>
        <taxon>Muridae</taxon>
        <taxon>Murinae</taxon>
        <taxon>Mus</taxon>
        <taxon>Mus</taxon>
    </lineage>
</organism>
<keyword id="KW-0143">Chaperone</keyword>
<keyword id="KW-0472">Membrane</keyword>
<keyword id="KW-0496">Mitochondrion</keyword>
<keyword id="KW-0597">Phosphoprotein</keyword>
<keyword id="KW-1185">Reference proteome</keyword>
<keyword id="KW-0812">Transmembrane</keyword>
<keyword id="KW-1133">Transmembrane helix</keyword>
<comment type="function">
    <text evidence="1">Chaperone protein involved in the assembly of the mitochondrial NADH:ubiquinone oxidoreductase complex (complex I). Participates in constructing the membrane arm of complex I (By similarity).</text>
</comment>
<comment type="subunit">
    <text evidence="1 2">Associates with the intermediate 315 kDa subcomplex of incompletely assembled complex I. Interacts with TMEM70 (By similarity).</text>
</comment>
<comment type="subcellular location">
    <subcellularLocation>
        <location evidence="1">Mitochondrion membrane</location>
        <topology evidence="1">Multi-pass membrane protein</topology>
    </subcellularLocation>
</comment>
<comment type="similarity">
    <text evidence="5">Belongs to the Tim17/Tim22/Tim23 family.</text>
</comment>
<name>TIDC1_MOUSE</name>